<accession>B4S888</accession>
<dbReference type="EMBL" id="CP001108">
    <property type="protein sequence ID" value="ACF46275.1"/>
    <property type="molecule type" value="Genomic_DNA"/>
</dbReference>
<dbReference type="RefSeq" id="WP_012505810.1">
    <property type="nucleotide sequence ID" value="NC_011059.1"/>
</dbReference>
<dbReference type="STRING" id="290512.Paes_1249"/>
<dbReference type="KEGG" id="paa:Paes_1249"/>
<dbReference type="eggNOG" id="COG1342">
    <property type="taxonomic scope" value="Bacteria"/>
</dbReference>
<dbReference type="HOGENOM" id="CLU_094511_0_1_10"/>
<dbReference type="Proteomes" id="UP000002725">
    <property type="component" value="Chromosome"/>
</dbReference>
<dbReference type="HAMAP" id="MF_00674">
    <property type="entry name" value="UPF0251"/>
    <property type="match status" value="1"/>
</dbReference>
<dbReference type="InterPro" id="IPR002852">
    <property type="entry name" value="UPF0251"/>
</dbReference>
<dbReference type="PANTHER" id="PTHR37478">
    <property type="match status" value="1"/>
</dbReference>
<dbReference type="PANTHER" id="PTHR37478:SF2">
    <property type="entry name" value="UPF0251 PROTEIN TK0562"/>
    <property type="match status" value="1"/>
</dbReference>
<dbReference type="Pfam" id="PF02001">
    <property type="entry name" value="DUF134"/>
    <property type="match status" value="1"/>
</dbReference>
<protein>
    <recommendedName>
        <fullName evidence="1">UPF0251 protein Paes_1249</fullName>
    </recommendedName>
</protein>
<proteinExistence type="inferred from homology"/>
<sequence length="155" mass="17303">MENNRAGRPKSCRRVKEMPKVRCFKPQGIPGIKLEEMVLSVDEMESLRLADLEGLYQSEAARRMDVSRQTFGRIIDSAHRKVADAIIHGKSIVIEGGVVMKREEQVHNAKPGCVCQHCGHEESHRSGLPCRDMICPECGHHMIRKGGCGTGQEDI</sequence>
<gene>
    <name type="ordered locus">Paes_1249</name>
</gene>
<organism>
    <name type="scientific">Prosthecochloris aestuarii (strain DSM 271 / SK 413)</name>
    <dbReference type="NCBI Taxonomy" id="290512"/>
    <lineage>
        <taxon>Bacteria</taxon>
        <taxon>Pseudomonadati</taxon>
        <taxon>Chlorobiota</taxon>
        <taxon>Chlorobiia</taxon>
        <taxon>Chlorobiales</taxon>
        <taxon>Chlorobiaceae</taxon>
        <taxon>Prosthecochloris</taxon>
    </lineage>
</organism>
<reference key="1">
    <citation type="submission" date="2008-06" db="EMBL/GenBank/DDBJ databases">
        <title>Complete sequence of chromosome of Prosthecochloris aestuarii DSM 271.</title>
        <authorList>
            <consortium name="US DOE Joint Genome Institute"/>
            <person name="Lucas S."/>
            <person name="Copeland A."/>
            <person name="Lapidus A."/>
            <person name="Glavina del Rio T."/>
            <person name="Dalin E."/>
            <person name="Tice H."/>
            <person name="Bruce D."/>
            <person name="Goodwin L."/>
            <person name="Pitluck S."/>
            <person name="Schmutz J."/>
            <person name="Larimer F."/>
            <person name="Land M."/>
            <person name="Hauser L."/>
            <person name="Kyrpides N."/>
            <person name="Anderson I."/>
            <person name="Liu Z."/>
            <person name="Li T."/>
            <person name="Zhao F."/>
            <person name="Overmann J."/>
            <person name="Bryant D.A."/>
            <person name="Richardson P."/>
        </authorList>
    </citation>
    <scope>NUCLEOTIDE SEQUENCE [LARGE SCALE GENOMIC DNA]</scope>
    <source>
        <strain>DSM 271 / SK 413</strain>
    </source>
</reference>
<name>Y1249_PROA2</name>
<evidence type="ECO:0000255" key="1">
    <source>
        <dbReference type="HAMAP-Rule" id="MF_00674"/>
    </source>
</evidence>
<feature type="chain" id="PRO_1000131583" description="UPF0251 protein Paes_1249">
    <location>
        <begin position="1"/>
        <end position="155"/>
    </location>
</feature>
<comment type="similarity">
    <text evidence="1">Belongs to the UPF0251 family.</text>
</comment>